<dbReference type="EMBL" id="AL391148">
    <property type="protein sequence ID" value="CAC01856.1"/>
    <property type="status" value="ALT_SEQ"/>
    <property type="molecule type" value="Genomic_DNA"/>
</dbReference>
<dbReference type="EMBL" id="CP002688">
    <property type="protein sequence ID" value="AED92253.1"/>
    <property type="molecule type" value="Genomic_DNA"/>
</dbReference>
<dbReference type="EMBL" id="CP002688">
    <property type="protein sequence ID" value="AED92254.1"/>
    <property type="molecule type" value="Genomic_DNA"/>
</dbReference>
<dbReference type="EMBL" id="CP002688">
    <property type="protein sequence ID" value="AED92255.1"/>
    <property type="molecule type" value="Genomic_DNA"/>
</dbReference>
<dbReference type="EMBL" id="AY058152">
    <property type="protein sequence ID" value="AAL25568.1"/>
    <property type="molecule type" value="mRNA"/>
</dbReference>
<dbReference type="EMBL" id="AY091052">
    <property type="protein sequence ID" value="AAM13873.1"/>
    <property type="molecule type" value="mRNA"/>
</dbReference>
<dbReference type="EMBL" id="AY117359">
    <property type="protein sequence ID" value="AAM51434.1"/>
    <property type="molecule type" value="mRNA"/>
</dbReference>
<dbReference type="EMBL" id="AF215855">
    <property type="protein sequence ID" value="AAF74569.1"/>
    <property type="status" value="ALT_SEQ"/>
    <property type="molecule type" value="Genomic_DNA"/>
</dbReference>
<dbReference type="EMBL" id="AK220813">
    <property type="protein sequence ID" value="BAD94093.1"/>
    <property type="status" value="ALT_INIT"/>
    <property type="molecule type" value="mRNA"/>
</dbReference>
<dbReference type="PIR" id="T51485">
    <property type="entry name" value="T51485"/>
</dbReference>
<dbReference type="SMR" id="Q56ZZ7"/>
<dbReference type="BioGRID" id="16748">
    <property type="interactions" value="34"/>
</dbReference>
<dbReference type="FunCoup" id="Q56ZZ7">
    <property type="interactions" value="582"/>
</dbReference>
<dbReference type="IntAct" id="Q56ZZ7">
    <property type="interactions" value="8"/>
</dbReference>
<dbReference type="STRING" id="3702.Q56ZZ7"/>
<dbReference type="TCDB" id="2.A.1.1.102">
    <property type="family name" value="the major facilitator superfamily (mfs)"/>
</dbReference>
<dbReference type="iPTMnet" id="Q56ZZ7"/>
<dbReference type="PaxDb" id="3702-AT5G16150.3"/>
<dbReference type="ProteomicsDB" id="235071"/>
<dbReference type="EnsemblPlants" id="AT5G16150.1">
    <property type="protein sequence ID" value="AT5G16150.1"/>
    <property type="gene ID" value="AT5G16150"/>
</dbReference>
<dbReference type="EnsemblPlants" id="AT5G16150.2">
    <property type="protein sequence ID" value="AT5G16150.2"/>
    <property type="gene ID" value="AT5G16150"/>
</dbReference>
<dbReference type="EnsemblPlants" id="AT5G16150.3">
    <property type="protein sequence ID" value="AT5G16150.3"/>
    <property type="gene ID" value="AT5G16150"/>
</dbReference>
<dbReference type="GeneID" id="831472"/>
<dbReference type="Gramene" id="AT5G16150.1">
    <property type="protein sequence ID" value="AT5G16150.1"/>
    <property type="gene ID" value="AT5G16150"/>
</dbReference>
<dbReference type="Gramene" id="AT5G16150.2">
    <property type="protein sequence ID" value="AT5G16150.2"/>
    <property type="gene ID" value="AT5G16150"/>
</dbReference>
<dbReference type="Gramene" id="AT5G16150.3">
    <property type="protein sequence ID" value="AT5G16150.3"/>
    <property type="gene ID" value="AT5G16150"/>
</dbReference>
<dbReference type="KEGG" id="ath:AT5G16150"/>
<dbReference type="Araport" id="AT5G16150"/>
<dbReference type="TAIR" id="AT5G16150">
    <property type="gene designation" value="PGLCT"/>
</dbReference>
<dbReference type="eggNOG" id="KOG0254">
    <property type="taxonomic scope" value="Eukaryota"/>
</dbReference>
<dbReference type="HOGENOM" id="CLU_001265_30_5_1"/>
<dbReference type="InParanoid" id="Q56ZZ7"/>
<dbReference type="OMA" id="WAITASF"/>
<dbReference type="PhylomeDB" id="Q56ZZ7"/>
<dbReference type="BioCyc" id="ARA:AT5G16150-MONOMER"/>
<dbReference type="BioCyc" id="MetaCyc:AT5G16150-MONOMER"/>
<dbReference type="PRO" id="PR:Q56ZZ7"/>
<dbReference type="Proteomes" id="UP000006548">
    <property type="component" value="Chromosome 5"/>
</dbReference>
<dbReference type="ExpressionAtlas" id="Q56ZZ7">
    <property type="expression patterns" value="baseline and differential"/>
</dbReference>
<dbReference type="GO" id="GO:0009941">
    <property type="term" value="C:chloroplast envelope"/>
    <property type="evidence" value="ECO:0007005"/>
    <property type="project" value="TAIR"/>
</dbReference>
<dbReference type="GO" id="GO:0009706">
    <property type="term" value="C:chloroplast inner membrane"/>
    <property type="evidence" value="ECO:0007669"/>
    <property type="project" value="UniProtKB-SubCell"/>
</dbReference>
<dbReference type="GO" id="GO:0009536">
    <property type="term" value="C:plastid"/>
    <property type="evidence" value="ECO:0007005"/>
    <property type="project" value="TAIR"/>
</dbReference>
<dbReference type="GO" id="GO:0022857">
    <property type="term" value="F:transmembrane transporter activity"/>
    <property type="evidence" value="ECO:0007669"/>
    <property type="project" value="InterPro"/>
</dbReference>
<dbReference type="CDD" id="cd17315">
    <property type="entry name" value="MFS_GLUT_like"/>
    <property type="match status" value="1"/>
</dbReference>
<dbReference type="FunFam" id="1.20.1250.20:FF:000152">
    <property type="entry name" value="Plastidic glucose transporter 4"/>
    <property type="match status" value="1"/>
</dbReference>
<dbReference type="Gene3D" id="1.20.1250.20">
    <property type="entry name" value="MFS general substrate transporter like domains"/>
    <property type="match status" value="1"/>
</dbReference>
<dbReference type="InterPro" id="IPR020846">
    <property type="entry name" value="MFS_dom"/>
</dbReference>
<dbReference type="InterPro" id="IPR005828">
    <property type="entry name" value="MFS_sugar_transport-like"/>
</dbReference>
<dbReference type="InterPro" id="IPR050360">
    <property type="entry name" value="MFS_Sugar_Transporters"/>
</dbReference>
<dbReference type="InterPro" id="IPR036259">
    <property type="entry name" value="MFS_trans_sf"/>
</dbReference>
<dbReference type="InterPro" id="IPR003663">
    <property type="entry name" value="Sugar/inositol_transpt"/>
</dbReference>
<dbReference type="InterPro" id="IPR005829">
    <property type="entry name" value="Sugar_transporter_CS"/>
</dbReference>
<dbReference type="NCBIfam" id="TIGR00879">
    <property type="entry name" value="SP"/>
    <property type="match status" value="1"/>
</dbReference>
<dbReference type="PANTHER" id="PTHR48022">
    <property type="entry name" value="PLASTIDIC GLUCOSE TRANSPORTER 4"/>
    <property type="match status" value="1"/>
</dbReference>
<dbReference type="PANTHER" id="PTHR48022:SF2">
    <property type="entry name" value="PLASTIDIC GLUCOSE TRANSPORTER 4"/>
    <property type="match status" value="1"/>
</dbReference>
<dbReference type="Pfam" id="PF00083">
    <property type="entry name" value="Sugar_tr"/>
    <property type="match status" value="1"/>
</dbReference>
<dbReference type="PRINTS" id="PR00171">
    <property type="entry name" value="SUGRTRNSPORT"/>
</dbReference>
<dbReference type="SUPFAM" id="SSF103473">
    <property type="entry name" value="MFS general substrate transporter"/>
    <property type="match status" value="1"/>
</dbReference>
<dbReference type="PROSITE" id="PS50850">
    <property type="entry name" value="MFS"/>
    <property type="match status" value="1"/>
</dbReference>
<dbReference type="PROSITE" id="PS00217">
    <property type="entry name" value="SUGAR_TRANSPORT_2"/>
    <property type="match status" value="1"/>
</dbReference>
<feature type="chain" id="PRO_0000259888" description="Plastidic glucose transporter 4">
    <location>
        <begin position="1"/>
        <end position="546"/>
    </location>
</feature>
<feature type="transmembrane region" description="Helical; Name=1" evidence="1">
    <location>
        <begin position="105"/>
        <end position="125"/>
    </location>
</feature>
<feature type="transmembrane region" description="Helical; Name=2" evidence="1">
    <location>
        <begin position="148"/>
        <end position="168"/>
    </location>
</feature>
<feature type="transmembrane region" description="Helical; Name=3" evidence="1">
    <location>
        <begin position="182"/>
        <end position="202"/>
    </location>
</feature>
<feature type="transmembrane region" description="Helical; Name=4" evidence="1">
    <location>
        <begin position="205"/>
        <end position="225"/>
    </location>
</feature>
<feature type="transmembrane region" description="Helical; Name=5" evidence="1">
    <location>
        <begin position="240"/>
        <end position="260"/>
    </location>
</feature>
<feature type="transmembrane region" description="Helical; Name=6" evidence="1">
    <location>
        <begin position="265"/>
        <end position="285"/>
    </location>
</feature>
<feature type="transmembrane region" description="Helical; Name=7" evidence="1">
    <location>
        <begin position="345"/>
        <end position="365"/>
    </location>
</feature>
<feature type="transmembrane region" description="Helical; Name=8" evidence="1">
    <location>
        <begin position="381"/>
        <end position="401"/>
    </location>
</feature>
<feature type="transmembrane region" description="Helical; Name=9" evidence="1">
    <location>
        <begin position="410"/>
        <end position="430"/>
    </location>
</feature>
<feature type="transmembrane region" description="Helical; Name=10" evidence="1">
    <location>
        <begin position="441"/>
        <end position="461"/>
    </location>
</feature>
<feature type="transmembrane region" description="Helical; Name=11" evidence="1">
    <location>
        <begin position="477"/>
        <end position="497"/>
    </location>
</feature>
<feature type="transmembrane region" description="Helical; Name=12" evidence="1">
    <location>
        <begin position="503"/>
        <end position="523"/>
    </location>
</feature>
<feature type="sequence conflict" description="In Ref. 4; AAF74569." evidence="3" ref="4">
    <location>
        <position position="86"/>
    </location>
</feature>
<feature type="sequence conflict" description="In Ref. 4; AAF74569." evidence="3" ref="4">
    <original>F</original>
    <variation>A</variation>
    <location>
        <position position="393"/>
    </location>
</feature>
<feature type="sequence conflict" description="In Ref. 4; AAF74569." evidence="3" ref="4">
    <original>AL</original>
    <variation>VH</variation>
    <location>
        <begin position="419"/>
        <end position="420"/>
    </location>
</feature>
<feature type="sequence conflict" description="In Ref. 4; AAF74569." evidence="3" ref="4">
    <original>TSGA</original>
    <variation>FVSS</variation>
    <location>
        <begin position="543"/>
        <end position="546"/>
    </location>
</feature>
<keyword id="KW-0150">Chloroplast</keyword>
<keyword id="KW-0472">Membrane</keyword>
<keyword id="KW-0934">Plastid</keyword>
<keyword id="KW-1001">Plastid inner membrane</keyword>
<keyword id="KW-1185">Reference proteome</keyword>
<keyword id="KW-0762">Sugar transport</keyword>
<keyword id="KW-0812">Transmembrane</keyword>
<keyword id="KW-1133">Transmembrane helix</keyword>
<keyword id="KW-0813">Transport</keyword>
<sequence length="546" mass="56970">MQSSTYAVKGNAAFAFQRRTFSSDRSTTSTGIRFAGYKSLATTGPLYCSGSEAMGATLARADNGIQSVMSFSSVKARSVRAQASSDGDEEEAIPLRSEGKSSGTVLPFVGVACLGAILFGYHLGVVNGALEYLAKDLGIAENTVLQGWIVSSLLAGATVGSFTGGALADKFGRTRTFQLDAIPLAIGAFLCATAQSVQTMIVGRLLAGIGIGISSAIVPLYISEISPTEIRGALGSVNQLFICIGILAALIAGLPLAANPLWWRTMFGVAVIPSVLLAIGMAFSPESPRWLVQQGKVSEAEKAIKTLYGKERVVELVRDLSASGQGSSEPEAGWFDLFSSRYWKVVSVGAALFLFQQLAGINAVVYYSTSVFRSAGIQSDVAASALVGASNVFGTAVASSLMDKMGRKSLLLTSFGGMALSMLLLSLSFTWKALAAYSGTLAVVGTVLYVLSFSLGAGPVPALLLPEIFASRIRAKAVALSLGMHWISNFVIGLYFLSVVTKFGISSVYLGFAGVCVLAVLYIAGNVVETKGRSLEEIELALTSGA</sequence>
<reference key="1">
    <citation type="journal article" date="2000" name="Nature">
        <title>Sequence and analysis of chromosome 5 of the plant Arabidopsis thaliana.</title>
        <authorList>
            <person name="Tabata S."/>
            <person name="Kaneko T."/>
            <person name="Nakamura Y."/>
            <person name="Kotani H."/>
            <person name="Kato T."/>
            <person name="Asamizu E."/>
            <person name="Miyajima N."/>
            <person name="Sasamoto S."/>
            <person name="Kimura T."/>
            <person name="Hosouchi T."/>
            <person name="Kawashima K."/>
            <person name="Kohara M."/>
            <person name="Matsumoto M."/>
            <person name="Matsuno A."/>
            <person name="Muraki A."/>
            <person name="Nakayama S."/>
            <person name="Nakazaki N."/>
            <person name="Naruo K."/>
            <person name="Okumura S."/>
            <person name="Shinpo S."/>
            <person name="Takeuchi C."/>
            <person name="Wada T."/>
            <person name="Watanabe A."/>
            <person name="Yamada M."/>
            <person name="Yasuda M."/>
            <person name="Sato S."/>
            <person name="de la Bastide M."/>
            <person name="Huang E."/>
            <person name="Spiegel L."/>
            <person name="Gnoj L."/>
            <person name="O'Shaughnessy A."/>
            <person name="Preston R."/>
            <person name="Habermann K."/>
            <person name="Murray J."/>
            <person name="Johnson D."/>
            <person name="Rohlfing T."/>
            <person name="Nelson J."/>
            <person name="Stoneking T."/>
            <person name="Pepin K."/>
            <person name="Spieth J."/>
            <person name="Sekhon M."/>
            <person name="Armstrong J."/>
            <person name="Becker M."/>
            <person name="Belter E."/>
            <person name="Cordum H."/>
            <person name="Cordes M."/>
            <person name="Courtney L."/>
            <person name="Courtney W."/>
            <person name="Dante M."/>
            <person name="Du H."/>
            <person name="Edwards J."/>
            <person name="Fryman J."/>
            <person name="Haakensen B."/>
            <person name="Lamar E."/>
            <person name="Latreille P."/>
            <person name="Leonard S."/>
            <person name="Meyer R."/>
            <person name="Mulvaney E."/>
            <person name="Ozersky P."/>
            <person name="Riley A."/>
            <person name="Strowmatt C."/>
            <person name="Wagner-McPherson C."/>
            <person name="Wollam A."/>
            <person name="Yoakum M."/>
            <person name="Bell M."/>
            <person name="Dedhia N."/>
            <person name="Parnell L."/>
            <person name="Shah R."/>
            <person name="Rodriguez M."/>
            <person name="Hoon See L."/>
            <person name="Vil D."/>
            <person name="Baker J."/>
            <person name="Kirchoff K."/>
            <person name="Toth K."/>
            <person name="King L."/>
            <person name="Bahret A."/>
            <person name="Miller B."/>
            <person name="Marra M.A."/>
            <person name="Martienssen R."/>
            <person name="McCombie W.R."/>
            <person name="Wilson R.K."/>
            <person name="Murphy G."/>
            <person name="Bancroft I."/>
            <person name="Volckaert G."/>
            <person name="Wambutt R."/>
            <person name="Duesterhoeft A."/>
            <person name="Stiekema W."/>
            <person name="Pohl T."/>
            <person name="Entian K.-D."/>
            <person name="Terryn N."/>
            <person name="Hartley N."/>
            <person name="Bent E."/>
            <person name="Johnson S."/>
            <person name="Langham S.-A."/>
            <person name="McCullagh B."/>
            <person name="Robben J."/>
            <person name="Grymonprez B."/>
            <person name="Zimmermann W."/>
            <person name="Ramsperger U."/>
            <person name="Wedler H."/>
            <person name="Balke K."/>
            <person name="Wedler E."/>
            <person name="Peters S."/>
            <person name="van Staveren M."/>
            <person name="Dirkse W."/>
            <person name="Mooijman P."/>
            <person name="Klein Lankhorst R."/>
            <person name="Weitzenegger T."/>
            <person name="Bothe G."/>
            <person name="Rose M."/>
            <person name="Hauf J."/>
            <person name="Berneiser S."/>
            <person name="Hempel S."/>
            <person name="Feldpausch M."/>
            <person name="Lamberth S."/>
            <person name="Villarroel R."/>
            <person name="Gielen J."/>
            <person name="Ardiles W."/>
            <person name="Bents O."/>
            <person name="Lemcke K."/>
            <person name="Kolesov G."/>
            <person name="Mayer K.F.X."/>
            <person name="Rudd S."/>
            <person name="Schoof H."/>
            <person name="Schueller C."/>
            <person name="Zaccaria P."/>
            <person name="Mewes H.-W."/>
            <person name="Bevan M."/>
            <person name="Fransz P.F."/>
        </authorList>
    </citation>
    <scope>NUCLEOTIDE SEQUENCE [LARGE SCALE GENOMIC DNA]</scope>
    <source>
        <strain>cv. Columbia</strain>
    </source>
</reference>
<reference key="2">
    <citation type="journal article" date="2017" name="Plant J.">
        <title>Araport11: a complete reannotation of the Arabidopsis thaliana reference genome.</title>
        <authorList>
            <person name="Cheng C.Y."/>
            <person name="Krishnakumar V."/>
            <person name="Chan A.P."/>
            <person name="Thibaud-Nissen F."/>
            <person name="Schobel S."/>
            <person name="Town C.D."/>
        </authorList>
    </citation>
    <scope>GENOME REANNOTATION</scope>
    <source>
        <strain>cv. Columbia</strain>
    </source>
</reference>
<reference key="3">
    <citation type="journal article" date="2003" name="Science">
        <title>Empirical analysis of transcriptional activity in the Arabidopsis genome.</title>
        <authorList>
            <person name="Yamada K."/>
            <person name="Lim J."/>
            <person name="Dale J.M."/>
            <person name="Chen H."/>
            <person name="Shinn P."/>
            <person name="Palm C.J."/>
            <person name="Southwick A.M."/>
            <person name="Wu H.C."/>
            <person name="Kim C.J."/>
            <person name="Nguyen M."/>
            <person name="Pham P.K."/>
            <person name="Cheuk R.F."/>
            <person name="Karlin-Newmann G."/>
            <person name="Liu S.X."/>
            <person name="Lam B."/>
            <person name="Sakano H."/>
            <person name="Wu T."/>
            <person name="Yu G."/>
            <person name="Miranda M."/>
            <person name="Quach H.L."/>
            <person name="Tripp M."/>
            <person name="Chang C.H."/>
            <person name="Lee J.M."/>
            <person name="Toriumi M.J."/>
            <person name="Chan M.M."/>
            <person name="Tang C.C."/>
            <person name="Onodera C.S."/>
            <person name="Deng J.M."/>
            <person name="Akiyama K."/>
            <person name="Ansari Y."/>
            <person name="Arakawa T."/>
            <person name="Banh J."/>
            <person name="Banno F."/>
            <person name="Bowser L."/>
            <person name="Brooks S.Y."/>
            <person name="Carninci P."/>
            <person name="Chao Q."/>
            <person name="Choy N."/>
            <person name="Enju A."/>
            <person name="Goldsmith A.D."/>
            <person name="Gurjal M."/>
            <person name="Hansen N.F."/>
            <person name="Hayashizaki Y."/>
            <person name="Johnson-Hopson C."/>
            <person name="Hsuan V.W."/>
            <person name="Iida K."/>
            <person name="Karnes M."/>
            <person name="Khan S."/>
            <person name="Koesema E."/>
            <person name="Ishida J."/>
            <person name="Jiang P.X."/>
            <person name="Jones T."/>
            <person name="Kawai J."/>
            <person name="Kamiya A."/>
            <person name="Meyers C."/>
            <person name="Nakajima M."/>
            <person name="Narusaka M."/>
            <person name="Seki M."/>
            <person name="Sakurai T."/>
            <person name="Satou M."/>
            <person name="Tamse R."/>
            <person name="Vaysberg M."/>
            <person name="Wallender E.K."/>
            <person name="Wong C."/>
            <person name="Yamamura Y."/>
            <person name="Yuan S."/>
            <person name="Shinozaki K."/>
            <person name="Davis R.W."/>
            <person name="Theologis A."/>
            <person name="Ecker J.R."/>
        </authorList>
    </citation>
    <scope>NUCLEOTIDE SEQUENCE [LARGE SCALE MRNA]</scope>
    <source>
        <strain>cv. Columbia</strain>
    </source>
</reference>
<reference key="4">
    <citation type="journal article" date="2000" name="Plant Cell">
        <title>Identification, purification, and molecular cloning of a putative plastidic glucose translocator.</title>
        <authorList>
            <person name="Weber A."/>
            <person name="Servaites J.C."/>
            <person name="Geiger D.R."/>
            <person name="Kofler H."/>
            <person name="Hille D."/>
            <person name="Groener F."/>
            <person name="Hebbeker U."/>
            <person name="Fluegge U.-I."/>
        </authorList>
    </citation>
    <scope>NUCLEOTIDE SEQUENCE [GENOMIC DNA] OF 34-546</scope>
    <scope>FUNCTION</scope>
    <scope>SUBCELLULAR LOCATION</scope>
    <source>
        <strain>cv. Columbia</strain>
    </source>
</reference>
<reference key="5">
    <citation type="submission" date="2005-03" db="EMBL/GenBank/DDBJ databases">
        <title>Large-scale analysis of RIKEN Arabidopsis full-length (RAFL) cDNAs.</title>
        <authorList>
            <person name="Totoki Y."/>
            <person name="Seki M."/>
            <person name="Ishida J."/>
            <person name="Nakajima M."/>
            <person name="Enju A."/>
            <person name="Kamiya A."/>
            <person name="Narusaka M."/>
            <person name="Shin-i T."/>
            <person name="Nakagawa M."/>
            <person name="Sakamoto N."/>
            <person name="Oishi K."/>
            <person name="Kohara Y."/>
            <person name="Kobayashi M."/>
            <person name="Toyoda A."/>
            <person name="Sakaki Y."/>
            <person name="Sakurai T."/>
            <person name="Iida K."/>
            <person name="Akiyama K."/>
            <person name="Satou M."/>
            <person name="Toyoda T."/>
            <person name="Konagaya A."/>
            <person name="Carninci P."/>
            <person name="Kawai J."/>
            <person name="Hayashizaki Y."/>
            <person name="Shinozaki K."/>
        </authorList>
    </citation>
    <scope>NUCLEOTIDE SEQUENCE [LARGE SCALE MRNA] OF 451-546</scope>
    <source>
        <strain>cv. Columbia</strain>
    </source>
</reference>
<reference key="6">
    <citation type="journal article" date="2006" name="BMC Evol. Biol.">
        <title>The monosaccharide transporter gene family in land plants is ancient and shows differential subfamily expression and expansion across lineages.</title>
        <authorList>
            <person name="Johnson D.A."/>
            <person name="Hill J.P."/>
            <person name="Thomas M.A."/>
        </authorList>
    </citation>
    <scope>GENE FAMILY</scope>
</reference>
<reference key="7">
    <citation type="journal article" date="2009" name="Plant Physiol.">
        <title>Large-scale Arabidopsis phosphoproteome profiling reveals novel chloroplast kinase substrates and phosphorylation networks.</title>
        <authorList>
            <person name="Reiland S."/>
            <person name="Messerli G."/>
            <person name="Baerenfaller K."/>
            <person name="Gerrits B."/>
            <person name="Endler A."/>
            <person name="Grossmann J."/>
            <person name="Gruissem W."/>
            <person name="Baginsky S."/>
        </authorList>
    </citation>
    <scope>IDENTIFICATION BY MASS SPECTROMETRY [LARGE SCALE ANALYSIS]</scope>
</reference>
<accession>Q56ZZ7</accession>
<accession>Q93Z41</accession>
<accession>Q9LF13</accession>
<accession>Q9LLD8</accession>
<gene>
    <name type="ordered locus">At5g16150</name>
    <name type="ORF">T21H19.70</name>
</gene>
<proteinExistence type="evidence at protein level"/>
<comment type="function">
    <text evidence="2">May be involved in the efflux of glucose towards the cytosol.</text>
</comment>
<comment type="subcellular location">
    <subcellularLocation>
        <location evidence="4">Plastid</location>
        <location evidence="4">Chloroplast inner membrane</location>
        <topology evidence="4">Multi-pass membrane protein</topology>
    </subcellularLocation>
</comment>
<comment type="similarity">
    <text evidence="3">Belongs to the major facilitator superfamily. Sugar transporter (TC 2.A.1.1) family.</text>
</comment>
<comment type="sequence caution" evidence="3">
    <conflict type="erroneous gene model prediction">
        <sequence resource="EMBL-CDS" id="AAF74569"/>
    </conflict>
</comment>
<comment type="sequence caution" evidence="3">
    <conflict type="erroneous initiation">
        <sequence resource="EMBL-CDS" id="BAD94093"/>
    </conflict>
</comment>
<comment type="sequence caution" evidence="3">
    <conflict type="erroneous gene model prediction">
        <sequence resource="EMBL-CDS" id="CAC01856"/>
    </conflict>
</comment>
<name>PLST4_ARATH</name>
<protein>
    <recommendedName>
        <fullName>Plastidic glucose transporter 4</fullName>
        <shortName>AtpGlcT</shortName>
    </recommendedName>
</protein>
<organism>
    <name type="scientific">Arabidopsis thaliana</name>
    <name type="common">Mouse-ear cress</name>
    <dbReference type="NCBI Taxonomy" id="3702"/>
    <lineage>
        <taxon>Eukaryota</taxon>
        <taxon>Viridiplantae</taxon>
        <taxon>Streptophyta</taxon>
        <taxon>Embryophyta</taxon>
        <taxon>Tracheophyta</taxon>
        <taxon>Spermatophyta</taxon>
        <taxon>Magnoliopsida</taxon>
        <taxon>eudicotyledons</taxon>
        <taxon>Gunneridae</taxon>
        <taxon>Pentapetalae</taxon>
        <taxon>rosids</taxon>
        <taxon>malvids</taxon>
        <taxon>Brassicales</taxon>
        <taxon>Brassicaceae</taxon>
        <taxon>Camelineae</taxon>
        <taxon>Arabidopsis</taxon>
    </lineage>
</organism>
<evidence type="ECO:0000255" key="1"/>
<evidence type="ECO:0000269" key="2">
    <source>
    </source>
</evidence>
<evidence type="ECO:0000305" key="3"/>
<evidence type="ECO:0000305" key="4">
    <source>
    </source>
</evidence>